<proteinExistence type="inferred from homology"/>
<keyword id="KW-0238">DNA-binding</keyword>
<keyword id="KW-0479">Metal-binding</keyword>
<keyword id="KW-0533">Nickel</keyword>
<keyword id="KW-0804">Transcription</keyword>
<keyword id="KW-0805">Transcription regulation</keyword>
<accession>A6VI08</accession>
<evidence type="ECO:0000255" key="1">
    <source>
        <dbReference type="HAMAP-Rule" id="MF_00476"/>
    </source>
</evidence>
<organism>
    <name type="scientific">Methanococcus maripaludis (strain C7 / ATCC BAA-1331)</name>
    <dbReference type="NCBI Taxonomy" id="426368"/>
    <lineage>
        <taxon>Archaea</taxon>
        <taxon>Methanobacteriati</taxon>
        <taxon>Methanobacteriota</taxon>
        <taxon>Methanomada group</taxon>
        <taxon>Methanococci</taxon>
        <taxon>Methanococcales</taxon>
        <taxon>Methanococcaceae</taxon>
        <taxon>Methanococcus</taxon>
    </lineage>
</organism>
<sequence length="141" mass="16056">MVDMDRISISLPTNLLAEFDEIIEERGYASRSEAIRDSIRDYLIKHKWIHSLEGHRAGTISIIYDHHSTDVMEKLTTIQHDYEKLIVATIHMHLDHDHCMEVVLVKGDASDIKDLTDKLTSQKGVKQVKLTVMVPGGNIPQ</sequence>
<reference key="1">
    <citation type="submission" date="2007-06" db="EMBL/GenBank/DDBJ databases">
        <title>Complete sequence of Methanococcus maripaludis C7.</title>
        <authorList>
            <consortium name="US DOE Joint Genome Institute"/>
            <person name="Copeland A."/>
            <person name="Lucas S."/>
            <person name="Lapidus A."/>
            <person name="Barry K."/>
            <person name="Glavina del Rio T."/>
            <person name="Dalin E."/>
            <person name="Tice H."/>
            <person name="Pitluck S."/>
            <person name="Clum A."/>
            <person name="Schmutz J."/>
            <person name="Larimer F."/>
            <person name="Land M."/>
            <person name="Hauser L."/>
            <person name="Kyrpides N."/>
            <person name="Anderson I."/>
            <person name="Sieprawska-Lupa M."/>
            <person name="Whitman W.B."/>
            <person name="Richardson P."/>
        </authorList>
    </citation>
    <scope>NUCLEOTIDE SEQUENCE [LARGE SCALE GENOMIC DNA]</scope>
    <source>
        <strain>C7 / ATCC BAA-1331</strain>
    </source>
</reference>
<protein>
    <recommendedName>
        <fullName evidence="1">Putative nickel-responsive regulator</fullName>
    </recommendedName>
</protein>
<name>NIKR_METM7</name>
<comment type="function">
    <text evidence="1">Transcriptional regulator.</text>
</comment>
<comment type="cofactor">
    <cofactor evidence="1">
        <name>Ni(2+)</name>
        <dbReference type="ChEBI" id="CHEBI:49786"/>
    </cofactor>
    <text evidence="1">Binds 1 nickel ion per subunit.</text>
</comment>
<comment type="similarity">
    <text evidence="1">Belongs to the transcriptional regulatory CopG/NikR family.</text>
</comment>
<feature type="chain" id="PRO_1000014074" description="Putative nickel-responsive regulator">
    <location>
        <begin position="1"/>
        <end position="141"/>
    </location>
</feature>
<feature type="binding site" evidence="1">
    <location>
        <position position="80"/>
    </location>
    <ligand>
        <name>Ni(2+)</name>
        <dbReference type="ChEBI" id="CHEBI:49786"/>
    </ligand>
</feature>
<feature type="binding site" evidence="1">
    <location>
        <position position="91"/>
    </location>
    <ligand>
        <name>Ni(2+)</name>
        <dbReference type="ChEBI" id="CHEBI:49786"/>
    </ligand>
</feature>
<feature type="binding site" evidence="1">
    <location>
        <position position="93"/>
    </location>
    <ligand>
        <name>Ni(2+)</name>
        <dbReference type="ChEBI" id="CHEBI:49786"/>
    </ligand>
</feature>
<feature type="binding site" evidence="1">
    <location>
        <position position="99"/>
    </location>
    <ligand>
        <name>Ni(2+)</name>
        <dbReference type="ChEBI" id="CHEBI:49786"/>
    </ligand>
</feature>
<dbReference type="EMBL" id="CP000745">
    <property type="protein sequence ID" value="ABR66084.1"/>
    <property type="molecule type" value="Genomic_DNA"/>
</dbReference>
<dbReference type="SMR" id="A6VI08"/>
<dbReference type="STRING" id="426368.MmarC7_1017"/>
<dbReference type="KEGG" id="mmz:MmarC7_1017"/>
<dbReference type="eggNOG" id="arCOG01008">
    <property type="taxonomic scope" value="Archaea"/>
</dbReference>
<dbReference type="HOGENOM" id="CLU_113319_1_2_2"/>
<dbReference type="OrthoDB" id="25654at2157"/>
<dbReference type="GO" id="GO:0003677">
    <property type="term" value="F:DNA binding"/>
    <property type="evidence" value="ECO:0007669"/>
    <property type="project" value="UniProtKB-KW"/>
</dbReference>
<dbReference type="GO" id="GO:0003700">
    <property type="term" value="F:DNA-binding transcription factor activity"/>
    <property type="evidence" value="ECO:0007669"/>
    <property type="project" value="UniProtKB-UniRule"/>
</dbReference>
<dbReference type="GO" id="GO:0016151">
    <property type="term" value="F:nickel cation binding"/>
    <property type="evidence" value="ECO:0007669"/>
    <property type="project" value="UniProtKB-UniRule"/>
</dbReference>
<dbReference type="GO" id="GO:0010045">
    <property type="term" value="P:response to nickel cation"/>
    <property type="evidence" value="ECO:0007669"/>
    <property type="project" value="InterPro"/>
</dbReference>
<dbReference type="CDD" id="cd22231">
    <property type="entry name" value="RHH_NikR_HicB-like"/>
    <property type="match status" value="1"/>
</dbReference>
<dbReference type="Gene3D" id="3.30.70.1150">
    <property type="entry name" value="ACT-like. Chain A, domain 2"/>
    <property type="match status" value="1"/>
</dbReference>
<dbReference type="Gene3D" id="1.10.1220.10">
    <property type="entry name" value="Met repressor-like"/>
    <property type="match status" value="1"/>
</dbReference>
<dbReference type="HAMAP" id="MF_00476">
    <property type="entry name" value="NikR"/>
    <property type="match status" value="1"/>
</dbReference>
<dbReference type="InterPro" id="IPR027271">
    <property type="entry name" value="Acetolactate_synth/TF_NikR_C"/>
</dbReference>
<dbReference type="InterPro" id="IPR045865">
    <property type="entry name" value="ACT-like_dom_sf"/>
</dbReference>
<dbReference type="InterPro" id="IPR013321">
    <property type="entry name" value="Arc_rbn_hlx_hlx"/>
</dbReference>
<dbReference type="InterPro" id="IPR002145">
    <property type="entry name" value="CopG"/>
</dbReference>
<dbReference type="InterPro" id="IPR050192">
    <property type="entry name" value="CopG/NikR_regulator"/>
</dbReference>
<dbReference type="InterPro" id="IPR022988">
    <property type="entry name" value="Ni_resp_reg_NikR"/>
</dbReference>
<dbReference type="InterPro" id="IPR010985">
    <property type="entry name" value="Ribbon_hlx_hlx"/>
</dbReference>
<dbReference type="InterPro" id="IPR014864">
    <property type="entry name" value="TF_NikR_Ni-bd_C"/>
</dbReference>
<dbReference type="NCBIfam" id="NF001884">
    <property type="entry name" value="PRK00630.1"/>
    <property type="match status" value="1"/>
</dbReference>
<dbReference type="NCBIfam" id="NF002169">
    <property type="entry name" value="PRK01002.1"/>
    <property type="match status" value="1"/>
</dbReference>
<dbReference type="NCBIfam" id="NF002815">
    <property type="entry name" value="PRK02967.1"/>
    <property type="match status" value="1"/>
</dbReference>
<dbReference type="NCBIfam" id="NF003381">
    <property type="entry name" value="PRK04460.1"/>
    <property type="match status" value="1"/>
</dbReference>
<dbReference type="PANTHER" id="PTHR34719">
    <property type="entry name" value="NICKEL-RESPONSIVE REGULATOR"/>
    <property type="match status" value="1"/>
</dbReference>
<dbReference type="PANTHER" id="PTHR34719:SF2">
    <property type="entry name" value="NICKEL-RESPONSIVE REGULATOR"/>
    <property type="match status" value="1"/>
</dbReference>
<dbReference type="Pfam" id="PF08753">
    <property type="entry name" value="NikR_C"/>
    <property type="match status" value="1"/>
</dbReference>
<dbReference type="Pfam" id="PF01402">
    <property type="entry name" value="RHH_1"/>
    <property type="match status" value="1"/>
</dbReference>
<dbReference type="SUPFAM" id="SSF55021">
    <property type="entry name" value="ACT-like"/>
    <property type="match status" value="1"/>
</dbReference>
<dbReference type="SUPFAM" id="SSF47598">
    <property type="entry name" value="Ribbon-helix-helix"/>
    <property type="match status" value="1"/>
</dbReference>
<gene>
    <name type="ordered locus">MmarC7_1017</name>
</gene>